<comment type="catalytic activity">
    <reaction evidence="1">
        <text>L-glutamine + H2O = L-glutamate + NH4(+)</text>
        <dbReference type="Rhea" id="RHEA:15889"/>
        <dbReference type="ChEBI" id="CHEBI:15377"/>
        <dbReference type="ChEBI" id="CHEBI:28938"/>
        <dbReference type="ChEBI" id="CHEBI:29985"/>
        <dbReference type="ChEBI" id="CHEBI:58359"/>
        <dbReference type="EC" id="3.5.1.2"/>
    </reaction>
</comment>
<comment type="biophysicochemical properties">
    <kinetics>
        <KM evidence="1">27.6 mM for glutamine</KM>
    </kinetics>
</comment>
<comment type="subunit">
    <text evidence="1">Homotetramer.</text>
</comment>
<comment type="similarity">
    <text evidence="2">Belongs to the glutaminase family.</text>
</comment>
<evidence type="ECO:0000269" key="1">
    <source>
    </source>
</evidence>
<evidence type="ECO:0000305" key="2"/>
<evidence type="ECO:0007829" key="3">
    <source>
        <dbReference type="PDB" id="1MKI"/>
    </source>
</evidence>
<evidence type="ECO:0007829" key="4">
    <source>
        <dbReference type="PDB" id="2OSU"/>
    </source>
</evidence>
<feature type="chain" id="PRO_0000110594" description="Glutaminase 1">
    <location>
        <begin position="1"/>
        <end position="327"/>
    </location>
</feature>
<feature type="binding site">
    <location>
        <position position="74"/>
    </location>
    <ligand>
        <name>substrate</name>
    </ligand>
</feature>
<feature type="binding site">
    <location>
        <position position="126"/>
    </location>
    <ligand>
        <name>substrate</name>
    </ligand>
</feature>
<feature type="binding site">
    <location>
        <position position="170"/>
    </location>
    <ligand>
        <name>substrate</name>
    </ligand>
</feature>
<feature type="binding site">
    <location>
        <position position="177"/>
    </location>
    <ligand>
        <name>substrate</name>
    </ligand>
</feature>
<feature type="binding site">
    <location>
        <position position="201"/>
    </location>
    <ligand>
        <name>substrate</name>
    </ligand>
</feature>
<feature type="binding site">
    <location>
        <position position="253"/>
    </location>
    <ligand>
        <name>substrate</name>
    </ligand>
</feature>
<feature type="binding site">
    <location>
        <position position="271"/>
    </location>
    <ligand>
        <name>substrate</name>
    </ligand>
</feature>
<feature type="helix" evidence="3">
    <location>
        <begin position="14"/>
        <end position="25"/>
    </location>
</feature>
<feature type="helix" evidence="3">
    <location>
        <begin position="26"/>
        <end position="31"/>
    </location>
</feature>
<feature type="helix" evidence="4">
    <location>
        <begin position="39"/>
        <end position="42"/>
    </location>
</feature>
<feature type="strand" evidence="3">
    <location>
        <begin position="50"/>
        <end position="54"/>
    </location>
</feature>
<feature type="strand" evidence="3">
    <location>
        <begin position="60"/>
        <end position="65"/>
    </location>
</feature>
<feature type="helix" evidence="3">
    <location>
        <begin position="73"/>
        <end position="75"/>
    </location>
</feature>
<feature type="helix" evidence="3">
    <location>
        <begin position="76"/>
        <end position="88"/>
    </location>
</feature>
<feature type="helix" evidence="3">
    <location>
        <begin position="90"/>
        <end position="94"/>
    </location>
</feature>
<feature type="helix" evidence="3">
    <location>
        <begin position="110"/>
        <end position="114"/>
    </location>
</feature>
<feature type="strand" evidence="3">
    <location>
        <begin position="123"/>
        <end position="125"/>
    </location>
</feature>
<feature type="helix" evidence="3">
    <location>
        <begin position="126"/>
        <end position="135"/>
    </location>
</feature>
<feature type="strand" evidence="3">
    <location>
        <begin position="136"/>
        <end position="140"/>
    </location>
</feature>
<feature type="helix" evidence="3">
    <location>
        <begin position="141"/>
        <end position="156"/>
    </location>
</feature>
<feature type="helix" evidence="3">
    <location>
        <begin position="164"/>
        <end position="173"/>
    </location>
</feature>
<feature type="helix" evidence="3">
    <location>
        <begin position="175"/>
        <end position="186"/>
    </location>
</feature>
<feature type="helix" evidence="3">
    <location>
        <begin position="194"/>
        <end position="205"/>
    </location>
</feature>
<feature type="strand" evidence="3">
    <location>
        <begin position="207"/>
        <end position="209"/>
    </location>
</feature>
<feature type="helix" evidence="3">
    <location>
        <begin position="211"/>
        <end position="222"/>
    </location>
</feature>
<feature type="turn" evidence="3">
    <location>
        <begin position="223"/>
        <end position="225"/>
    </location>
</feature>
<feature type="turn" evidence="3">
    <location>
        <begin position="228"/>
        <end position="231"/>
    </location>
</feature>
<feature type="helix" evidence="3">
    <location>
        <begin position="237"/>
        <end position="250"/>
    </location>
</feature>
<feature type="helix" evidence="3">
    <location>
        <begin position="253"/>
        <end position="255"/>
    </location>
</feature>
<feature type="helix" evidence="3">
    <location>
        <begin position="256"/>
        <end position="262"/>
    </location>
</feature>
<feature type="strand" evidence="3">
    <location>
        <begin position="267"/>
        <end position="269"/>
    </location>
</feature>
<feature type="strand" evidence="3">
    <location>
        <begin position="273"/>
        <end position="279"/>
    </location>
</feature>
<feature type="turn" evidence="3">
    <location>
        <begin position="281"/>
        <end position="284"/>
    </location>
</feature>
<feature type="turn" evidence="3">
    <location>
        <begin position="288"/>
        <end position="291"/>
    </location>
</feature>
<feature type="strand" evidence="3">
    <location>
        <begin position="293"/>
        <end position="298"/>
    </location>
</feature>
<feature type="strand" evidence="3">
    <location>
        <begin position="306"/>
        <end position="308"/>
    </location>
</feature>
<feature type="helix" evidence="3">
    <location>
        <begin position="309"/>
        <end position="322"/>
    </location>
</feature>
<keyword id="KW-0002">3D-structure</keyword>
<keyword id="KW-0378">Hydrolase</keyword>
<keyword id="KW-1185">Reference proteome</keyword>
<organism>
    <name type="scientific">Bacillus subtilis (strain 168)</name>
    <dbReference type="NCBI Taxonomy" id="224308"/>
    <lineage>
        <taxon>Bacteria</taxon>
        <taxon>Bacillati</taxon>
        <taxon>Bacillota</taxon>
        <taxon>Bacilli</taxon>
        <taxon>Bacillales</taxon>
        <taxon>Bacillaceae</taxon>
        <taxon>Bacillus</taxon>
    </lineage>
</organism>
<accession>O31465</accession>
<gene>
    <name type="primary">glsA1</name>
    <name type="synonym">glsA</name>
    <name type="synonym">ybgJ</name>
    <name type="ordered locus">BSU02430</name>
</gene>
<dbReference type="EC" id="3.5.1.2"/>
<dbReference type="EMBL" id="AB006424">
    <property type="protein sequence ID" value="BAA33141.1"/>
    <property type="molecule type" value="Genomic_DNA"/>
</dbReference>
<dbReference type="EMBL" id="AL009126">
    <property type="protein sequence ID" value="CAB12037.1"/>
    <property type="molecule type" value="Genomic_DNA"/>
</dbReference>
<dbReference type="PIR" id="D69751">
    <property type="entry name" value="D69751"/>
</dbReference>
<dbReference type="RefSeq" id="NP_388125.1">
    <property type="nucleotide sequence ID" value="NC_000964.3"/>
</dbReference>
<dbReference type="RefSeq" id="WP_003234829.1">
    <property type="nucleotide sequence ID" value="NZ_OZ025638.1"/>
</dbReference>
<dbReference type="PDB" id="1MKI">
    <property type="method" value="X-ray"/>
    <property type="resolution" value="2.00 A"/>
    <property type="chains" value="A/B=1-327"/>
</dbReference>
<dbReference type="PDB" id="2OSU">
    <property type="method" value="X-ray"/>
    <property type="resolution" value="2.29 A"/>
    <property type="chains" value="A/B=1-327"/>
</dbReference>
<dbReference type="PDB" id="3AGF">
    <property type="method" value="X-ray"/>
    <property type="resolution" value="2.60 A"/>
    <property type="chains" value="A/B=1-327"/>
</dbReference>
<dbReference type="PDB" id="3BRM">
    <property type="method" value="X-ray"/>
    <property type="resolution" value="2.29 A"/>
    <property type="chains" value="A/B=1-327"/>
</dbReference>
<dbReference type="PDBsum" id="1MKI"/>
<dbReference type="PDBsum" id="2OSU"/>
<dbReference type="PDBsum" id="3AGF"/>
<dbReference type="PDBsum" id="3BRM"/>
<dbReference type="SMR" id="O31465"/>
<dbReference type="FunCoup" id="O31465">
    <property type="interactions" value="336"/>
</dbReference>
<dbReference type="STRING" id="224308.BSU02430"/>
<dbReference type="DrugBank" id="DB04522">
    <property type="generic name" value="Dexfosfoserine"/>
</dbReference>
<dbReference type="DrugBank" id="DB01942">
    <property type="generic name" value="Formic acid"/>
</dbReference>
<dbReference type="PaxDb" id="224308-BSU02430"/>
<dbReference type="DNASU" id="938416"/>
<dbReference type="EnsemblBacteria" id="CAB12037">
    <property type="protein sequence ID" value="CAB12037"/>
    <property type="gene ID" value="BSU_02430"/>
</dbReference>
<dbReference type="GeneID" id="938416"/>
<dbReference type="KEGG" id="bsu:BSU02430"/>
<dbReference type="PATRIC" id="fig|224308.179.peg.250"/>
<dbReference type="eggNOG" id="COG2066">
    <property type="taxonomic scope" value="Bacteria"/>
</dbReference>
<dbReference type="InParanoid" id="O31465"/>
<dbReference type="OrthoDB" id="9788822at2"/>
<dbReference type="PhylomeDB" id="O31465"/>
<dbReference type="BioCyc" id="BSUB:BSU02430-MONOMER"/>
<dbReference type="BRENDA" id="3.5.1.2">
    <property type="organism ID" value="658"/>
</dbReference>
<dbReference type="BRENDA" id="4.3.3.6">
    <property type="organism ID" value="658"/>
</dbReference>
<dbReference type="SABIO-RK" id="O31465"/>
<dbReference type="EvolutionaryTrace" id="O31465"/>
<dbReference type="PRO" id="PR:O31465"/>
<dbReference type="Proteomes" id="UP000001570">
    <property type="component" value="Chromosome"/>
</dbReference>
<dbReference type="GO" id="GO:0004359">
    <property type="term" value="F:glutaminase activity"/>
    <property type="evidence" value="ECO:0000318"/>
    <property type="project" value="GO_Central"/>
</dbReference>
<dbReference type="GO" id="GO:0006537">
    <property type="term" value="P:glutamate biosynthetic process"/>
    <property type="evidence" value="ECO:0000318"/>
    <property type="project" value="GO_Central"/>
</dbReference>
<dbReference type="GO" id="GO:0006543">
    <property type="term" value="P:glutamine catabolic process"/>
    <property type="evidence" value="ECO:0000318"/>
    <property type="project" value="GO_Central"/>
</dbReference>
<dbReference type="FunFam" id="3.40.710.10:FF:000005">
    <property type="entry name" value="Glutaminase"/>
    <property type="match status" value="1"/>
</dbReference>
<dbReference type="Gene3D" id="1.10.1500.10">
    <property type="match status" value="1"/>
</dbReference>
<dbReference type="Gene3D" id="3.40.710.10">
    <property type="entry name" value="DD-peptidase/beta-lactamase superfamily"/>
    <property type="match status" value="1"/>
</dbReference>
<dbReference type="HAMAP" id="MF_00313">
    <property type="entry name" value="Glutaminase"/>
    <property type="match status" value="1"/>
</dbReference>
<dbReference type="InterPro" id="IPR012338">
    <property type="entry name" value="Beta-lactam/transpept-like"/>
</dbReference>
<dbReference type="InterPro" id="IPR015868">
    <property type="entry name" value="Glutaminase"/>
</dbReference>
<dbReference type="NCBIfam" id="TIGR03814">
    <property type="entry name" value="Gln_ase"/>
    <property type="match status" value="1"/>
</dbReference>
<dbReference type="NCBIfam" id="NF009021">
    <property type="entry name" value="PRK12357.1"/>
    <property type="match status" value="1"/>
</dbReference>
<dbReference type="PANTHER" id="PTHR12544">
    <property type="entry name" value="GLUTAMINASE"/>
    <property type="match status" value="1"/>
</dbReference>
<dbReference type="PANTHER" id="PTHR12544:SF32">
    <property type="entry name" value="GLUTAMINASE 1"/>
    <property type="match status" value="1"/>
</dbReference>
<dbReference type="Pfam" id="PF04960">
    <property type="entry name" value="Glutaminase"/>
    <property type="match status" value="1"/>
</dbReference>
<dbReference type="SUPFAM" id="SSF56601">
    <property type="entry name" value="beta-lactamase/transpeptidase-like"/>
    <property type="match status" value="1"/>
</dbReference>
<reference key="1">
    <citation type="submission" date="1997-07" db="EMBL/GenBank/DDBJ databases">
        <title>Sequence analysis of the 70kb region between 17 and 23 degree of the Bacillus subtilis chromosome.</title>
        <authorList>
            <person name="Haga K."/>
            <person name="Liu H."/>
            <person name="Yasumoto K."/>
            <person name="Takahashi H."/>
            <person name="Yoshikawa H."/>
        </authorList>
    </citation>
    <scope>NUCLEOTIDE SEQUENCE [GENOMIC DNA]</scope>
    <source>
        <strain>168</strain>
    </source>
</reference>
<reference key="2">
    <citation type="journal article" date="1997" name="Nature">
        <title>The complete genome sequence of the Gram-positive bacterium Bacillus subtilis.</title>
        <authorList>
            <person name="Kunst F."/>
            <person name="Ogasawara N."/>
            <person name="Moszer I."/>
            <person name="Albertini A.M."/>
            <person name="Alloni G."/>
            <person name="Azevedo V."/>
            <person name="Bertero M.G."/>
            <person name="Bessieres P."/>
            <person name="Bolotin A."/>
            <person name="Borchert S."/>
            <person name="Borriss R."/>
            <person name="Boursier L."/>
            <person name="Brans A."/>
            <person name="Braun M."/>
            <person name="Brignell S.C."/>
            <person name="Bron S."/>
            <person name="Brouillet S."/>
            <person name="Bruschi C.V."/>
            <person name="Caldwell B."/>
            <person name="Capuano V."/>
            <person name="Carter N.M."/>
            <person name="Choi S.-K."/>
            <person name="Codani J.-J."/>
            <person name="Connerton I.F."/>
            <person name="Cummings N.J."/>
            <person name="Daniel R.A."/>
            <person name="Denizot F."/>
            <person name="Devine K.M."/>
            <person name="Duesterhoeft A."/>
            <person name="Ehrlich S.D."/>
            <person name="Emmerson P.T."/>
            <person name="Entian K.-D."/>
            <person name="Errington J."/>
            <person name="Fabret C."/>
            <person name="Ferrari E."/>
            <person name="Foulger D."/>
            <person name="Fritz C."/>
            <person name="Fujita M."/>
            <person name="Fujita Y."/>
            <person name="Fuma S."/>
            <person name="Galizzi A."/>
            <person name="Galleron N."/>
            <person name="Ghim S.-Y."/>
            <person name="Glaser P."/>
            <person name="Goffeau A."/>
            <person name="Golightly E.J."/>
            <person name="Grandi G."/>
            <person name="Guiseppi G."/>
            <person name="Guy B.J."/>
            <person name="Haga K."/>
            <person name="Haiech J."/>
            <person name="Harwood C.R."/>
            <person name="Henaut A."/>
            <person name="Hilbert H."/>
            <person name="Holsappel S."/>
            <person name="Hosono S."/>
            <person name="Hullo M.-F."/>
            <person name="Itaya M."/>
            <person name="Jones L.-M."/>
            <person name="Joris B."/>
            <person name="Karamata D."/>
            <person name="Kasahara Y."/>
            <person name="Klaerr-Blanchard M."/>
            <person name="Klein C."/>
            <person name="Kobayashi Y."/>
            <person name="Koetter P."/>
            <person name="Koningstein G."/>
            <person name="Krogh S."/>
            <person name="Kumano M."/>
            <person name="Kurita K."/>
            <person name="Lapidus A."/>
            <person name="Lardinois S."/>
            <person name="Lauber J."/>
            <person name="Lazarevic V."/>
            <person name="Lee S.-M."/>
            <person name="Levine A."/>
            <person name="Liu H."/>
            <person name="Masuda S."/>
            <person name="Mauel C."/>
            <person name="Medigue C."/>
            <person name="Medina N."/>
            <person name="Mellado R.P."/>
            <person name="Mizuno M."/>
            <person name="Moestl D."/>
            <person name="Nakai S."/>
            <person name="Noback M."/>
            <person name="Noone D."/>
            <person name="O'Reilly M."/>
            <person name="Ogawa K."/>
            <person name="Ogiwara A."/>
            <person name="Oudega B."/>
            <person name="Park S.-H."/>
            <person name="Parro V."/>
            <person name="Pohl T.M."/>
            <person name="Portetelle D."/>
            <person name="Porwollik S."/>
            <person name="Prescott A.M."/>
            <person name="Presecan E."/>
            <person name="Pujic P."/>
            <person name="Purnelle B."/>
            <person name="Rapoport G."/>
            <person name="Rey M."/>
            <person name="Reynolds S."/>
            <person name="Rieger M."/>
            <person name="Rivolta C."/>
            <person name="Rocha E."/>
            <person name="Roche B."/>
            <person name="Rose M."/>
            <person name="Sadaie Y."/>
            <person name="Sato T."/>
            <person name="Scanlan E."/>
            <person name="Schleich S."/>
            <person name="Schroeter R."/>
            <person name="Scoffone F."/>
            <person name="Sekiguchi J."/>
            <person name="Sekowska A."/>
            <person name="Seror S.J."/>
            <person name="Serror P."/>
            <person name="Shin B.-S."/>
            <person name="Soldo B."/>
            <person name="Sorokin A."/>
            <person name="Tacconi E."/>
            <person name="Takagi T."/>
            <person name="Takahashi H."/>
            <person name="Takemaru K."/>
            <person name="Takeuchi M."/>
            <person name="Tamakoshi A."/>
            <person name="Tanaka T."/>
            <person name="Terpstra P."/>
            <person name="Tognoni A."/>
            <person name="Tosato V."/>
            <person name="Uchiyama S."/>
            <person name="Vandenbol M."/>
            <person name="Vannier F."/>
            <person name="Vassarotti A."/>
            <person name="Viari A."/>
            <person name="Wambutt R."/>
            <person name="Wedler E."/>
            <person name="Wedler H."/>
            <person name="Weitzenegger T."/>
            <person name="Winters P."/>
            <person name="Wipat A."/>
            <person name="Yamamoto H."/>
            <person name="Yamane K."/>
            <person name="Yasumoto K."/>
            <person name="Yata K."/>
            <person name="Yoshida K."/>
            <person name="Yoshikawa H.-F."/>
            <person name="Zumstein E."/>
            <person name="Yoshikawa H."/>
            <person name="Danchin A."/>
        </authorList>
    </citation>
    <scope>NUCLEOTIDE SEQUENCE [LARGE SCALE GENOMIC DNA]</scope>
    <source>
        <strain>168</strain>
    </source>
</reference>
<reference key="3">
    <citation type="journal article" date="2005" name="J. Bacteriol.">
        <title>Enhancement of glutamine utilization in Bacillus subtilis through the GlnK-GlnL two-component regulatory system.</title>
        <authorList>
            <person name="Satomura T."/>
            <person name="Shimura D."/>
            <person name="Asai K."/>
            <person name="Sadaie Y."/>
            <person name="Hirooka K."/>
            <person name="Fujita Y."/>
        </authorList>
    </citation>
    <scope>FUNCTION</scope>
    <scope>GENE NAME</scope>
    <source>
        <strain>168</strain>
    </source>
</reference>
<reference key="4">
    <citation type="journal article" date="2008" name="Biochemistry">
        <title>Functional and structural characterization of four glutaminases from Escherichia coli and Bacillus subtilis.</title>
        <authorList>
            <person name="Brown G."/>
            <person name="Singer A."/>
            <person name="Proudfoot M."/>
            <person name="Skarina T."/>
            <person name="Kim Y."/>
            <person name="Chang C."/>
            <person name="Dementieva I."/>
            <person name="Kuznetsova E."/>
            <person name="Gonzalez C.F."/>
            <person name="Joachimiak A."/>
            <person name="Savchenko A."/>
            <person name="Yakunin A.F."/>
        </authorList>
    </citation>
    <scope>X-RAY CRYSTALLOGRAPHY (2.00 ANGSTROMS) IN COMPLEX WITH INHIBITOR 5-OXO-L-NORLEUCINE</scope>
    <scope>CATALYTIC ACTIVITY</scope>
    <scope>BIOPHYSICOCHEMICAL PROPERTIES</scope>
    <scope>SUBUNIT</scope>
</reference>
<name>GLSA1_BACSU</name>
<protein>
    <recommendedName>
        <fullName>Glutaminase 1</fullName>
        <ecNumber>3.5.1.2</ecNumber>
    </recommendedName>
</protein>
<proteinExistence type="evidence at protein level"/>
<sequence>MKELIKEHQKDINPALQLHDWVEYYRPFAANGQSANYIPALGKVNDSQLGICVLEPDGTMIHAGDWNVSFTMQSISKVISFIAACMSRGIPYVLDRVDVEPTGDAFNSIIRLEINKPGKPFNPMINAGALTIASILPGESAYEKLEFLYSVMETLIGKRPRIHEEVFRSEWETAHRNRALAYYLKETNFLEAEVEETLEVYLKQCAMESTTEDIALIGLILAHDGYHPIRHEQVIPKDVAKLAKALMLTCGMYNASGKYAAFVGVPAKSGVSGGIMALVPPSARREQPFQSGCGIGIYGPAIDEYGNSLTGGMLLKHMAQEWELSIF</sequence>